<gene>
    <name type="primary">SIFV0021</name>
</gene>
<sequence>MVILNKYYSMKEEYEILNIEIKDDNLFVSVKLIRNGSVEIFNYVPIQNIPKIIKNFSLVTQKNLMDN</sequence>
<keyword id="KW-1185">Reference proteome</keyword>
<organismHost>
    <name type="scientific">Saccharolobus islandicus</name>
    <name type="common">Sulfolobus islandicus</name>
    <dbReference type="NCBI Taxonomy" id="43080"/>
</organismHost>
<proteinExistence type="predicted"/>
<reference key="1">
    <citation type="journal article" date="2000" name="Virology">
        <title>A novel lipothrixvirus, SIFV, of the extremely thermophilic crenarchaeon Sulfolobus.</title>
        <authorList>
            <person name="Arnold H.P."/>
            <person name="Zillig W."/>
            <person name="Ziese U."/>
            <person name="Holz I."/>
            <person name="Crosby M."/>
            <person name="Utterback T."/>
            <person name="Weidmann J.F."/>
            <person name="Umayam L.A."/>
            <person name="Teffera K."/>
            <person name="Kristjanson J.K."/>
            <person name="Klenk H.P."/>
            <person name="Nelson K.E."/>
            <person name="Fraser C.M."/>
        </authorList>
    </citation>
    <scope>NUCLEOTIDE SEQUENCE [GENOMIC DNA]</scope>
</reference>
<name>Y021_SIFVH</name>
<feature type="chain" id="PRO_0000385426" description="Uncharacterized protein 21">
    <location>
        <begin position="1"/>
        <end position="67"/>
    </location>
</feature>
<accession>Q914K9</accession>
<protein>
    <recommendedName>
        <fullName>Uncharacterized protein 21</fullName>
    </recommendedName>
</protein>
<dbReference type="EMBL" id="AF440571">
    <property type="protein sequence ID" value="AAL27732.1"/>
    <property type="molecule type" value="Genomic_DNA"/>
</dbReference>
<dbReference type="RefSeq" id="NP_445686.1">
    <property type="nucleotide sequence ID" value="NC_003214.2"/>
</dbReference>
<dbReference type="GeneID" id="922313"/>
<dbReference type="KEGG" id="vg:922313"/>
<dbReference type="Proteomes" id="UP000007017">
    <property type="component" value="Segment"/>
</dbReference>
<organism>
    <name type="scientific">Sulfolobus islandicus filamentous virus (isolate Iceland/Hveragerdi)</name>
    <name type="common">SIFV</name>
    <dbReference type="NCBI Taxonomy" id="654908"/>
    <lineage>
        <taxon>Viruses</taxon>
        <taxon>Adnaviria</taxon>
        <taxon>Zilligvirae</taxon>
        <taxon>Taleaviricota</taxon>
        <taxon>Tokiviricetes</taxon>
        <taxon>Ligamenvirales</taxon>
        <taxon>Lipothrixviridae</taxon>
        <taxon>Betalipothrixvirus</taxon>
        <taxon>Sulfolobus islandicus filamentous virus</taxon>
    </lineage>
</organism>